<accession>A6UV42</accession>
<dbReference type="EMBL" id="CP000743">
    <property type="protein sequence ID" value="ABR56364.1"/>
    <property type="molecule type" value="Genomic_DNA"/>
</dbReference>
<dbReference type="RefSeq" id="WP_011973496.1">
    <property type="nucleotide sequence ID" value="NC_009635.1"/>
</dbReference>
<dbReference type="SMR" id="A6UV42"/>
<dbReference type="STRING" id="419665.Maeo_0781"/>
<dbReference type="GeneID" id="5326974"/>
<dbReference type="KEGG" id="mae:Maeo_0781"/>
<dbReference type="eggNOG" id="arCOG01758">
    <property type="taxonomic scope" value="Archaea"/>
</dbReference>
<dbReference type="HOGENOM" id="CLU_122625_0_1_2"/>
<dbReference type="OrthoDB" id="371736at2157"/>
<dbReference type="Proteomes" id="UP000001106">
    <property type="component" value="Chromosome"/>
</dbReference>
<dbReference type="GO" id="GO:0015935">
    <property type="term" value="C:small ribosomal subunit"/>
    <property type="evidence" value="ECO:0007669"/>
    <property type="project" value="InterPro"/>
</dbReference>
<dbReference type="GO" id="GO:0003735">
    <property type="term" value="F:structural constituent of ribosome"/>
    <property type="evidence" value="ECO:0007669"/>
    <property type="project" value="InterPro"/>
</dbReference>
<dbReference type="GO" id="GO:0000049">
    <property type="term" value="F:tRNA binding"/>
    <property type="evidence" value="ECO:0007669"/>
    <property type="project" value="UniProtKB-UniRule"/>
</dbReference>
<dbReference type="GO" id="GO:0006412">
    <property type="term" value="P:translation"/>
    <property type="evidence" value="ECO:0007669"/>
    <property type="project" value="UniProtKB-UniRule"/>
</dbReference>
<dbReference type="FunFam" id="3.30.70.600:FF:000004">
    <property type="entry name" value="30S ribosomal protein S10"/>
    <property type="match status" value="1"/>
</dbReference>
<dbReference type="Gene3D" id="3.30.70.600">
    <property type="entry name" value="Ribosomal protein S10 domain"/>
    <property type="match status" value="1"/>
</dbReference>
<dbReference type="HAMAP" id="MF_00508">
    <property type="entry name" value="Ribosomal_uS10"/>
    <property type="match status" value="1"/>
</dbReference>
<dbReference type="InterPro" id="IPR001848">
    <property type="entry name" value="Ribosomal_uS10"/>
</dbReference>
<dbReference type="InterPro" id="IPR018268">
    <property type="entry name" value="Ribosomal_uS10_CS"/>
</dbReference>
<dbReference type="InterPro" id="IPR027486">
    <property type="entry name" value="Ribosomal_uS10_dom"/>
</dbReference>
<dbReference type="InterPro" id="IPR036838">
    <property type="entry name" value="Ribosomal_uS10_dom_sf"/>
</dbReference>
<dbReference type="InterPro" id="IPR005729">
    <property type="entry name" value="Ribosomal_uS10_euk/arc"/>
</dbReference>
<dbReference type="NCBIfam" id="TIGR01046">
    <property type="entry name" value="uS10_euk_arch"/>
    <property type="match status" value="1"/>
</dbReference>
<dbReference type="PANTHER" id="PTHR11700">
    <property type="entry name" value="30S RIBOSOMAL PROTEIN S10 FAMILY MEMBER"/>
    <property type="match status" value="1"/>
</dbReference>
<dbReference type="Pfam" id="PF00338">
    <property type="entry name" value="Ribosomal_S10"/>
    <property type="match status" value="1"/>
</dbReference>
<dbReference type="PRINTS" id="PR00971">
    <property type="entry name" value="RIBOSOMALS10"/>
</dbReference>
<dbReference type="SMART" id="SM01403">
    <property type="entry name" value="Ribosomal_S10"/>
    <property type="match status" value="1"/>
</dbReference>
<dbReference type="SUPFAM" id="SSF54999">
    <property type="entry name" value="Ribosomal protein S10"/>
    <property type="match status" value="1"/>
</dbReference>
<dbReference type="PROSITE" id="PS00361">
    <property type="entry name" value="RIBOSOMAL_S10"/>
    <property type="match status" value="1"/>
</dbReference>
<reference key="1">
    <citation type="submission" date="2007-06" db="EMBL/GenBank/DDBJ databases">
        <title>Complete sequence of Methanococcus aeolicus Nankai-3.</title>
        <authorList>
            <consortium name="US DOE Joint Genome Institute"/>
            <person name="Copeland A."/>
            <person name="Lucas S."/>
            <person name="Lapidus A."/>
            <person name="Barry K."/>
            <person name="Glavina del Rio T."/>
            <person name="Dalin E."/>
            <person name="Tice H."/>
            <person name="Pitluck S."/>
            <person name="Chain P."/>
            <person name="Malfatti S."/>
            <person name="Shin M."/>
            <person name="Vergez L."/>
            <person name="Schmutz J."/>
            <person name="Larimer F."/>
            <person name="Land M."/>
            <person name="Hauser L."/>
            <person name="Kyrpides N."/>
            <person name="Lykidis A."/>
            <person name="Sieprawska-Lupa M."/>
            <person name="Whitman W.B."/>
            <person name="Richardson P."/>
        </authorList>
    </citation>
    <scope>NUCLEOTIDE SEQUENCE [LARGE SCALE GENOMIC DNA]</scope>
    <source>
        <strain>ATCC BAA-1280 / DSM 17508 / OCM 812 / Nankai-3</strain>
    </source>
</reference>
<sequence>MQKARIKLSSTSYQELDGVCNNIKTIAEKTGVDMAGPIPLPTKTLKVTTRKSTDGEGSSSFDRWTMRVHKRVIDIEADERTMKHIMKIRIPEAVQIEIELRS</sequence>
<organism>
    <name type="scientific">Methanococcus aeolicus (strain ATCC BAA-1280 / DSM 17508 / OCM 812 / Nankai-3)</name>
    <dbReference type="NCBI Taxonomy" id="419665"/>
    <lineage>
        <taxon>Archaea</taxon>
        <taxon>Methanobacteriati</taxon>
        <taxon>Methanobacteriota</taxon>
        <taxon>Methanomada group</taxon>
        <taxon>Methanococci</taxon>
        <taxon>Methanococcales</taxon>
        <taxon>Methanococcaceae</taxon>
        <taxon>Methanococcus</taxon>
    </lineage>
</organism>
<gene>
    <name evidence="1" type="primary">rps10</name>
    <name type="ordered locus">Maeo_0781</name>
</gene>
<proteinExistence type="inferred from homology"/>
<comment type="function">
    <text evidence="1">Involved in the binding of tRNA to the ribosomes.</text>
</comment>
<comment type="subunit">
    <text evidence="1">Part of the 30S ribosomal subunit.</text>
</comment>
<comment type="similarity">
    <text evidence="1">Belongs to the universal ribosomal protein uS10 family.</text>
</comment>
<name>RS10_META3</name>
<keyword id="KW-0687">Ribonucleoprotein</keyword>
<keyword id="KW-0689">Ribosomal protein</keyword>
<evidence type="ECO:0000255" key="1">
    <source>
        <dbReference type="HAMAP-Rule" id="MF_00508"/>
    </source>
</evidence>
<evidence type="ECO:0000256" key="2">
    <source>
        <dbReference type="SAM" id="MobiDB-lite"/>
    </source>
</evidence>
<evidence type="ECO:0000305" key="3"/>
<protein>
    <recommendedName>
        <fullName evidence="1">Small ribosomal subunit protein uS10</fullName>
    </recommendedName>
    <alternativeName>
        <fullName evidence="3">30S ribosomal protein S10</fullName>
    </alternativeName>
</protein>
<feature type="chain" id="PRO_1000015050" description="Small ribosomal subunit protein uS10">
    <location>
        <begin position="1"/>
        <end position="102"/>
    </location>
</feature>
<feature type="region of interest" description="Disordered" evidence="2">
    <location>
        <begin position="34"/>
        <end position="61"/>
    </location>
</feature>